<protein>
    <recommendedName>
        <fullName>Acidic phospholipase A2 PePLA2</fullName>
        <shortName>svPLA2</shortName>
        <ecNumber>3.1.1.4</ecNumber>
    </recommendedName>
    <alternativeName>
        <fullName>Phosphatidylcholine 2-acylhydrolase</fullName>
    </alternativeName>
</protein>
<accession>Q2PG83</accession>
<organism>
    <name type="scientific">Protobothrops elegans</name>
    <name type="common">Elegant pitviper</name>
    <name type="synonym">Trimeresurus elegans</name>
    <dbReference type="NCBI Taxonomy" id="88086"/>
    <lineage>
        <taxon>Eukaryota</taxon>
        <taxon>Metazoa</taxon>
        <taxon>Chordata</taxon>
        <taxon>Craniata</taxon>
        <taxon>Vertebrata</taxon>
        <taxon>Euteleostomi</taxon>
        <taxon>Lepidosauria</taxon>
        <taxon>Squamata</taxon>
        <taxon>Bifurcata</taxon>
        <taxon>Unidentata</taxon>
        <taxon>Episquamata</taxon>
        <taxon>Toxicofera</taxon>
        <taxon>Serpentes</taxon>
        <taxon>Colubroidea</taxon>
        <taxon>Viperidae</taxon>
        <taxon>Crotalinae</taxon>
        <taxon>Protobothrops</taxon>
    </lineage>
</organism>
<evidence type="ECO:0000250" key="1"/>
<evidence type="ECO:0000255" key="2">
    <source>
        <dbReference type="PROSITE-ProRule" id="PRU10035"/>
    </source>
</evidence>
<evidence type="ECO:0000255" key="3">
    <source>
        <dbReference type="PROSITE-ProRule" id="PRU10036"/>
    </source>
</evidence>
<evidence type="ECO:0000305" key="4"/>
<proteinExistence type="evidence at transcript level"/>
<name>PA2A_PROEL</name>
<feature type="signal peptide" evidence="1">
    <location>
        <begin position="1"/>
        <end position="16"/>
    </location>
</feature>
<feature type="chain" id="PRO_0000419051" description="Acidic phospholipase A2 PePLA2">
    <location>
        <begin position="17"/>
        <end position="138"/>
    </location>
</feature>
<feature type="active site" evidence="1">
    <location>
        <position position="63"/>
    </location>
</feature>
<feature type="active site" evidence="1">
    <location>
        <position position="104"/>
    </location>
</feature>
<feature type="binding site" evidence="1">
    <location>
        <position position="43"/>
    </location>
    <ligand>
        <name>Ca(2+)</name>
        <dbReference type="ChEBI" id="CHEBI:29108"/>
    </ligand>
</feature>
<feature type="binding site" evidence="1">
    <location>
        <position position="45"/>
    </location>
    <ligand>
        <name>Ca(2+)</name>
        <dbReference type="ChEBI" id="CHEBI:29108"/>
    </ligand>
</feature>
<feature type="binding site" evidence="1">
    <location>
        <position position="47"/>
    </location>
    <ligand>
        <name>Ca(2+)</name>
        <dbReference type="ChEBI" id="CHEBI:29108"/>
    </ligand>
</feature>
<feature type="binding site" evidence="1">
    <location>
        <position position="64"/>
    </location>
    <ligand>
        <name>Ca(2+)</name>
        <dbReference type="ChEBI" id="CHEBI:29108"/>
    </ligand>
</feature>
<feature type="disulfide bond" evidence="1">
    <location>
        <begin position="42"/>
        <end position="131"/>
    </location>
</feature>
<feature type="disulfide bond" evidence="1">
    <location>
        <begin position="44"/>
        <end position="60"/>
    </location>
</feature>
<feature type="disulfide bond" evidence="1">
    <location>
        <begin position="59"/>
        <end position="110"/>
    </location>
</feature>
<feature type="disulfide bond" evidence="1">
    <location>
        <begin position="65"/>
        <end position="138"/>
    </location>
</feature>
<feature type="disulfide bond" evidence="1">
    <location>
        <begin position="66"/>
        <end position="103"/>
    </location>
</feature>
<feature type="disulfide bond" evidence="1">
    <location>
        <begin position="73"/>
        <end position="97"/>
    </location>
</feature>
<feature type="disulfide bond" evidence="1">
    <location>
        <begin position="91"/>
        <end position="101"/>
    </location>
</feature>
<dbReference type="EC" id="3.1.1.4"/>
<dbReference type="EMBL" id="AB219805">
    <property type="protein sequence ID" value="BAE72888.1"/>
    <property type="molecule type" value="mRNA"/>
</dbReference>
<dbReference type="SMR" id="Q2PG83"/>
<dbReference type="GO" id="GO:0005576">
    <property type="term" value="C:extracellular region"/>
    <property type="evidence" value="ECO:0007669"/>
    <property type="project" value="UniProtKB-SubCell"/>
</dbReference>
<dbReference type="GO" id="GO:0005509">
    <property type="term" value="F:calcium ion binding"/>
    <property type="evidence" value="ECO:0007669"/>
    <property type="project" value="InterPro"/>
</dbReference>
<dbReference type="GO" id="GO:0047498">
    <property type="term" value="F:calcium-dependent phospholipase A2 activity"/>
    <property type="evidence" value="ECO:0007669"/>
    <property type="project" value="TreeGrafter"/>
</dbReference>
<dbReference type="GO" id="GO:0005543">
    <property type="term" value="F:phospholipid binding"/>
    <property type="evidence" value="ECO:0007669"/>
    <property type="project" value="TreeGrafter"/>
</dbReference>
<dbReference type="GO" id="GO:0090729">
    <property type="term" value="F:toxin activity"/>
    <property type="evidence" value="ECO:0007669"/>
    <property type="project" value="UniProtKB-KW"/>
</dbReference>
<dbReference type="GO" id="GO:0050482">
    <property type="term" value="P:arachidonate secretion"/>
    <property type="evidence" value="ECO:0007669"/>
    <property type="project" value="InterPro"/>
</dbReference>
<dbReference type="GO" id="GO:0016042">
    <property type="term" value="P:lipid catabolic process"/>
    <property type="evidence" value="ECO:0007669"/>
    <property type="project" value="InterPro"/>
</dbReference>
<dbReference type="GO" id="GO:0042130">
    <property type="term" value="P:negative regulation of T cell proliferation"/>
    <property type="evidence" value="ECO:0007669"/>
    <property type="project" value="TreeGrafter"/>
</dbReference>
<dbReference type="GO" id="GO:0006644">
    <property type="term" value="P:phospholipid metabolic process"/>
    <property type="evidence" value="ECO:0007669"/>
    <property type="project" value="InterPro"/>
</dbReference>
<dbReference type="CDD" id="cd00125">
    <property type="entry name" value="PLA2c"/>
    <property type="match status" value="1"/>
</dbReference>
<dbReference type="FunFam" id="1.20.90.10:FF:000001">
    <property type="entry name" value="Basic phospholipase A2 homolog"/>
    <property type="match status" value="1"/>
</dbReference>
<dbReference type="Gene3D" id="1.20.90.10">
    <property type="entry name" value="Phospholipase A2 domain"/>
    <property type="match status" value="1"/>
</dbReference>
<dbReference type="InterPro" id="IPR001211">
    <property type="entry name" value="PLipase_A2"/>
</dbReference>
<dbReference type="InterPro" id="IPR033112">
    <property type="entry name" value="PLipase_A2_Asp_AS"/>
</dbReference>
<dbReference type="InterPro" id="IPR016090">
    <property type="entry name" value="PLipase_A2_dom"/>
</dbReference>
<dbReference type="InterPro" id="IPR036444">
    <property type="entry name" value="PLipase_A2_dom_sf"/>
</dbReference>
<dbReference type="InterPro" id="IPR033113">
    <property type="entry name" value="PLipase_A2_His_AS"/>
</dbReference>
<dbReference type="PANTHER" id="PTHR11716">
    <property type="entry name" value="PHOSPHOLIPASE A2 FAMILY MEMBER"/>
    <property type="match status" value="1"/>
</dbReference>
<dbReference type="PANTHER" id="PTHR11716:SF9">
    <property type="entry name" value="PHOSPHOLIPASE A2, MEMBRANE ASSOCIATED"/>
    <property type="match status" value="1"/>
</dbReference>
<dbReference type="Pfam" id="PF00068">
    <property type="entry name" value="Phospholip_A2_1"/>
    <property type="match status" value="1"/>
</dbReference>
<dbReference type="PRINTS" id="PR00389">
    <property type="entry name" value="PHPHLIPASEA2"/>
</dbReference>
<dbReference type="SMART" id="SM00085">
    <property type="entry name" value="PA2c"/>
    <property type="match status" value="1"/>
</dbReference>
<dbReference type="SUPFAM" id="SSF48619">
    <property type="entry name" value="Phospholipase A2, PLA2"/>
    <property type="match status" value="1"/>
</dbReference>
<dbReference type="PROSITE" id="PS00119">
    <property type="entry name" value="PA2_ASP"/>
    <property type="match status" value="1"/>
</dbReference>
<dbReference type="PROSITE" id="PS00118">
    <property type="entry name" value="PA2_HIS"/>
    <property type="match status" value="1"/>
</dbReference>
<keyword id="KW-0106">Calcium</keyword>
<keyword id="KW-1015">Disulfide bond</keyword>
<keyword id="KW-0378">Hydrolase</keyword>
<keyword id="KW-0479">Metal-binding</keyword>
<keyword id="KW-0964">Secreted</keyword>
<keyword id="KW-0732">Signal</keyword>
<keyword id="KW-0800">Toxin</keyword>
<reference key="1">
    <citation type="journal article" date="2006" name="Toxicon">
        <title>Discovery of novel [Arg49]phospholipase A2 isozymes from Protobothrops elegans venom and regional evolution of Crotalinae snake venom phospholipase A2 isozymes in the southwestern islands of Japan and Taiwan.</title>
        <authorList>
            <person name="Chijiwa T."/>
            <person name="Tokunaga E."/>
            <person name="Ikeda R."/>
            <person name="Terada K."/>
            <person name="Ogawa T."/>
            <person name="Oda-Ueda N."/>
            <person name="Hattori S."/>
            <person name="Nozaki M."/>
            <person name="Ohno M."/>
        </authorList>
    </citation>
    <scope>NUCLEOTIDE SEQUENCE [MRNA]</scope>
    <source>
        <tissue>Venom gland</tissue>
    </source>
</reference>
<sequence length="138" mass="15369">MRTLWIMAVLLLGVEGGLWQFENMIMKVAKKSGILSYSAYGCYCGWGGRGTPKDATDRCCFVHDCCYGKVTGCNPKLGKYTYISENGDIICGGDGPCKEVCECDRAAAICFRDNLDTYDRKTYWKYPASNCQEDSEPC</sequence>
<comment type="function">
    <text evidence="1">PLA2 catalyzes the calcium-dependent hydrolysis of the 2-acyl groups in 3-sn-phosphoglycerides.</text>
</comment>
<comment type="catalytic activity">
    <reaction evidence="2 3">
        <text>a 1,2-diacyl-sn-glycero-3-phosphocholine + H2O = a 1-acyl-sn-glycero-3-phosphocholine + a fatty acid + H(+)</text>
        <dbReference type="Rhea" id="RHEA:15801"/>
        <dbReference type="ChEBI" id="CHEBI:15377"/>
        <dbReference type="ChEBI" id="CHEBI:15378"/>
        <dbReference type="ChEBI" id="CHEBI:28868"/>
        <dbReference type="ChEBI" id="CHEBI:57643"/>
        <dbReference type="ChEBI" id="CHEBI:58168"/>
        <dbReference type="EC" id="3.1.1.4"/>
    </reaction>
</comment>
<comment type="cofactor">
    <cofactor evidence="1">
        <name>Ca(2+)</name>
        <dbReference type="ChEBI" id="CHEBI:29108"/>
    </cofactor>
    <text evidence="1">Binds 1 Ca(2+) ion.</text>
</comment>
<comment type="subcellular location">
    <subcellularLocation>
        <location evidence="1">Secreted</location>
    </subcellularLocation>
</comment>
<comment type="tissue specificity">
    <text>Expressed by the venom gland.</text>
</comment>
<comment type="similarity">
    <text evidence="4">Belongs to the phospholipase A2 family. Group II subfamily. D49 sub-subfamily.</text>
</comment>